<organism>
    <name type="scientific">Pseudomonas fluorescens (strain SBW25)</name>
    <dbReference type="NCBI Taxonomy" id="216595"/>
    <lineage>
        <taxon>Bacteria</taxon>
        <taxon>Pseudomonadati</taxon>
        <taxon>Pseudomonadota</taxon>
        <taxon>Gammaproteobacteria</taxon>
        <taxon>Pseudomonadales</taxon>
        <taxon>Pseudomonadaceae</taxon>
        <taxon>Pseudomonas</taxon>
    </lineage>
</organism>
<comment type="function">
    <text evidence="1">Could be a nuclease involved in processing of the 5'-end of pre-16S rRNA.</text>
</comment>
<comment type="subcellular location">
    <subcellularLocation>
        <location evidence="1">Cytoplasm</location>
    </subcellularLocation>
</comment>
<comment type="similarity">
    <text evidence="1">Belongs to the YqgF nuclease family.</text>
</comment>
<reference key="1">
    <citation type="journal article" date="2009" name="Genome Biol.">
        <title>Genomic and genetic analyses of diversity and plant interactions of Pseudomonas fluorescens.</title>
        <authorList>
            <person name="Silby M.W."/>
            <person name="Cerdeno-Tarraga A.M."/>
            <person name="Vernikos G.S."/>
            <person name="Giddens S.R."/>
            <person name="Jackson R.W."/>
            <person name="Preston G.M."/>
            <person name="Zhang X.-X."/>
            <person name="Moon C.D."/>
            <person name="Gehrig S.M."/>
            <person name="Godfrey S.A.C."/>
            <person name="Knight C.G."/>
            <person name="Malone J.G."/>
            <person name="Robinson Z."/>
            <person name="Spiers A.J."/>
            <person name="Harris S."/>
            <person name="Challis G.L."/>
            <person name="Yaxley A.M."/>
            <person name="Harris D."/>
            <person name="Seeger K."/>
            <person name="Murphy L."/>
            <person name="Rutter S."/>
            <person name="Squares R."/>
            <person name="Quail M.A."/>
            <person name="Saunders E."/>
            <person name="Mavromatis K."/>
            <person name="Brettin T.S."/>
            <person name="Bentley S.D."/>
            <person name="Hothersall J."/>
            <person name="Stephens E."/>
            <person name="Thomas C.M."/>
            <person name="Parkhill J."/>
            <person name="Levy S.B."/>
            <person name="Rainey P.B."/>
            <person name="Thomson N.R."/>
        </authorList>
    </citation>
    <scope>NUCLEOTIDE SEQUENCE [LARGE SCALE GENOMIC DNA]</scope>
    <source>
        <strain>SBW25</strain>
    </source>
</reference>
<dbReference type="EC" id="3.1.-.-" evidence="1"/>
<dbReference type="EMBL" id="AM181176">
    <property type="protein sequence ID" value="CAY53130.1"/>
    <property type="molecule type" value="Genomic_DNA"/>
</dbReference>
<dbReference type="SMR" id="C3K3K0"/>
<dbReference type="STRING" id="294.SRM1_05405"/>
<dbReference type="eggNOG" id="COG0816">
    <property type="taxonomic scope" value="Bacteria"/>
</dbReference>
<dbReference type="HOGENOM" id="CLU_098240_3_0_6"/>
<dbReference type="OrthoDB" id="9796140at2"/>
<dbReference type="GO" id="GO:0005829">
    <property type="term" value="C:cytosol"/>
    <property type="evidence" value="ECO:0007669"/>
    <property type="project" value="TreeGrafter"/>
</dbReference>
<dbReference type="GO" id="GO:0004518">
    <property type="term" value="F:nuclease activity"/>
    <property type="evidence" value="ECO:0007669"/>
    <property type="project" value="UniProtKB-KW"/>
</dbReference>
<dbReference type="GO" id="GO:0000967">
    <property type="term" value="P:rRNA 5'-end processing"/>
    <property type="evidence" value="ECO:0007669"/>
    <property type="project" value="UniProtKB-UniRule"/>
</dbReference>
<dbReference type="CDD" id="cd16964">
    <property type="entry name" value="YqgF"/>
    <property type="match status" value="1"/>
</dbReference>
<dbReference type="Gene3D" id="3.30.420.140">
    <property type="entry name" value="YqgF/RNase H-like domain"/>
    <property type="match status" value="1"/>
</dbReference>
<dbReference type="HAMAP" id="MF_00651">
    <property type="entry name" value="Nuclease_YqgF"/>
    <property type="match status" value="1"/>
</dbReference>
<dbReference type="InterPro" id="IPR012337">
    <property type="entry name" value="RNaseH-like_sf"/>
</dbReference>
<dbReference type="InterPro" id="IPR005227">
    <property type="entry name" value="YqgF"/>
</dbReference>
<dbReference type="InterPro" id="IPR006641">
    <property type="entry name" value="YqgF/RNaseH-like_dom"/>
</dbReference>
<dbReference type="InterPro" id="IPR037027">
    <property type="entry name" value="YqgF/RNaseH-like_dom_sf"/>
</dbReference>
<dbReference type="NCBIfam" id="TIGR00250">
    <property type="entry name" value="RNAse_H_YqgF"/>
    <property type="match status" value="1"/>
</dbReference>
<dbReference type="PANTHER" id="PTHR33317">
    <property type="entry name" value="POLYNUCLEOTIDYL TRANSFERASE, RIBONUCLEASE H-LIKE SUPERFAMILY PROTEIN"/>
    <property type="match status" value="1"/>
</dbReference>
<dbReference type="PANTHER" id="PTHR33317:SF4">
    <property type="entry name" value="POLYNUCLEOTIDYL TRANSFERASE, RIBONUCLEASE H-LIKE SUPERFAMILY PROTEIN"/>
    <property type="match status" value="1"/>
</dbReference>
<dbReference type="Pfam" id="PF03652">
    <property type="entry name" value="RuvX"/>
    <property type="match status" value="1"/>
</dbReference>
<dbReference type="SMART" id="SM00732">
    <property type="entry name" value="YqgFc"/>
    <property type="match status" value="1"/>
</dbReference>
<dbReference type="SUPFAM" id="SSF53098">
    <property type="entry name" value="Ribonuclease H-like"/>
    <property type="match status" value="1"/>
</dbReference>
<accession>C3K3K0</accession>
<gene>
    <name type="ordered locus">PFLU_5756</name>
</gene>
<evidence type="ECO:0000255" key="1">
    <source>
        <dbReference type="HAMAP-Rule" id="MF_00651"/>
    </source>
</evidence>
<name>YQGF_PSEFS</name>
<keyword id="KW-0963">Cytoplasm</keyword>
<keyword id="KW-0378">Hydrolase</keyword>
<keyword id="KW-0540">Nuclease</keyword>
<keyword id="KW-0690">Ribosome biogenesis</keyword>
<feature type="chain" id="PRO_1000212417" description="Putative pre-16S rRNA nuclease">
    <location>
        <begin position="1"/>
        <end position="145"/>
    </location>
</feature>
<proteinExistence type="inferred from homology"/>
<sequence>MALRLILGFDYGTKQIGVAVGQVITGQARELCTLKAQNGIPDWNQVEALIKEWKPDAVVVGLPLNMDGTPSDMCLRAEKFARRLNGRYNIPFYTHDERLTTFEAKGERRDRGGQKGSYRDNPVDAIAAALLLQGWLDENTALFES</sequence>
<protein>
    <recommendedName>
        <fullName evidence="1">Putative pre-16S rRNA nuclease</fullName>
        <ecNumber evidence="1">3.1.-.-</ecNumber>
    </recommendedName>
</protein>